<dbReference type="EC" id="2.1.2.11" evidence="1"/>
<dbReference type="EMBL" id="AE000513">
    <property type="protein sequence ID" value="AAF12151.1"/>
    <property type="status" value="ALT_INIT"/>
    <property type="molecule type" value="Genomic_DNA"/>
</dbReference>
<dbReference type="PIR" id="E75253">
    <property type="entry name" value="E75253"/>
</dbReference>
<dbReference type="RefSeq" id="NP_296334.1">
    <property type="nucleotide sequence ID" value="NC_001263.1"/>
</dbReference>
<dbReference type="RefSeq" id="WP_010889239.1">
    <property type="nucleotide sequence ID" value="NZ_JMLF01000017.1"/>
</dbReference>
<dbReference type="SMR" id="Q9RR81"/>
<dbReference type="FunCoup" id="Q9RR81">
    <property type="interactions" value="359"/>
</dbReference>
<dbReference type="STRING" id="243230.DR_2615"/>
<dbReference type="PaxDb" id="243230-DR_2615"/>
<dbReference type="EnsemblBacteria" id="AAF12151">
    <property type="protein sequence ID" value="AAF12151"/>
    <property type="gene ID" value="DR_2615"/>
</dbReference>
<dbReference type="GeneID" id="69518869"/>
<dbReference type="KEGG" id="dra:DR_2615"/>
<dbReference type="PATRIC" id="fig|243230.17.peg.2862"/>
<dbReference type="eggNOG" id="COG0413">
    <property type="taxonomic scope" value="Bacteria"/>
</dbReference>
<dbReference type="HOGENOM" id="CLU_036645_1_0_0"/>
<dbReference type="InParanoid" id="Q9RR81"/>
<dbReference type="OrthoDB" id="9781789at2"/>
<dbReference type="UniPathway" id="UPA00028">
    <property type="reaction ID" value="UER00003"/>
</dbReference>
<dbReference type="Proteomes" id="UP000002524">
    <property type="component" value="Chromosome 1"/>
</dbReference>
<dbReference type="GO" id="GO:0005737">
    <property type="term" value="C:cytoplasm"/>
    <property type="evidence" value="ECO:0000318"/>
    <property type="project" value="GO_Central"/>
</dbReference>
<dbReference type="GO" id="GO:0003864">
    <property type="term" value="F:3-methyl-2-oxobutanoate hydroxymethyltransferase activity"/>
    <property type="evidence" value="ECO:0000318"/>
    <property type="project" value="GO_Central"/>
</dbReference>
<dbReference type="GO" id="GO:0000287">
    <property type="term" value="F:magnesium ion binding"/>
    <property type="evidence" value="ECO:0000318"/>
    <property type="project" value="GO_Central"/>
</dbReference>
<dbReference type="GO" id="GO:0015940">
    <property type="term" value="P:pantothenate biosynthetic process"/>
    <property type="evidence" value="ECO:0000318"/>
    <property type="project" value="GO_Central"/>
</dbReference>
<dbReference type="CDD" id="cd06557">
    <property type="entry name" value="KPHMT-like"/>
    <property type="match status" value="1"/>
</dbReference>
<dbReference type="FunFam" id="3.20.20.60:FF:000003">
    <property type="entry name" value="3-methyl-2-oxobutanoate hydroxymethyltransferase"/>
    <property type="match status" value="1"/>
</dbReference>
<dbReference type="Gene3D" id="3.20.20.60">
    <property type="entry name" value="Phosphoenolpyruvate-binding domains"/>
    <property type="match status" value="1"/>
</dbReference>
<dbReference type="HAMAP" id="MF_00156">
    <property type="entry name" value="PanB"/>
    <property type="match status" value="1"/>
</dbReference>
<dbReference type="InterPro" id="IPR003700">
    <property type="entry name" value="Pantoate_hydroxy_MeTrfase"/>
</dbReference>
<dbReference type="InterPro" id="IPR015813">
    <property type="entry name" value="Pyrv/PenolPyrv_kinase-like_dom"/>
</dbReference>
<dbReference type="InterPro" id="IPR040442">
    <property type="entry name" value="Pyrv_kinase-like_dom_sf"/>
</dbReference>
<dbReference type="NCBIfam" id="TIGR00222">
    <property type="entry name" value="panB"/>
    <property type="match status" value="1"/>
</dbReference>
<dbReference type="NCBIfam" id="NF001452">
    <property type="entry name" value="PRK00311.1"/>
    <property type="match status" value="1"/>
</dbReference>
<dbReference type="PANTHER" id="PTHR20881">
    <property type="entry name" value="3-METHYL-2-OXOBUTANOATE HYDROXYMETHYLTRANSFERASE"/>
    <property type="match status" value="1"/>
</dbReference>
<dbReference type="PANTHER" id="PTHR20881:SF0">
    <property type="entry name" value="3-METHYL-2-OXOBUTANOATE HYDROXYMETHYLTRANSFERASE"/>
    <property type="match status" value="1"/>
</dbReference>
<dbReference type="Pfam" id="PF02548">
    <property type="entry name" value="Pantoate_transf"/>
    <property type="match status" value="1"/>
</dbReference>
<dbReference type="PIRSF" id="PIRSF000388">
    <property type="entry name" value="Pantoate_hydroxy_MeTrfase"/>
    <property type="match status" value="1"/>
</dbReference>
<dbReference type="SUPFAM" id="SSF51621">
    <property type="entry name" value="Phosphoenolpyruvate/pyruvate domain"/>
    <property type="match status" value="1"/>
</dbReference>
<accession>Q9RR81</accession>
<gene>
    <name evidence="1" type="primary">panB</name>
    <name type="ordered locus">DR_2615</name>
</gene>
<evidence type="ECO:0000255" key="1">
    <source>
        <dbReference type="HAMAP-Rule" id="MF_00156"/>
    </source>
</evidence>
<evidence type="ECO:0000305" key="2"/>
<reference key="1">
    <citation type="journal article" date="1999" name="Science">
        <title>Genome sequence of the radioresistant bacterium Deinococcus radiodurans R1.</title>
        <authorList>
            <person name="White O."/>
            <person name="Eisen J.A."/>
            <person name="Heidelberg J.F."/>
            <person name="Hickey E.K."/>
            <person name="Peterson J.D."/>
            <person name="Dodson R.J."/>
            <person name="Haft D.H."/>
            <person name="Gwinn M.L."/>
            <person name="Nelson W.C."/>
            <person name="Richardson D.L."/>
            <person name="Moffat K.S."/>
            <person name="Qin H."/>
            <person name="Jiang L."/>
            <person name="Pamphile W."/>
            <person name="Crosby M."/>
            <person name="Shen M."/>
            <person name="Vamathevan J.J."/>
            <person name="Lam P."/>
            <person name="McDonald L.A."/>
            <person name="Utterback T.R."/>
            <person name="Zalewski C."/>
            <person name="Makarova K.S."/>
            <person name="Aravind L."/>
            <person name="Daly M.J."/>
            <person name="Minton K.W."/>
            <person name="Fleischmann R.D."/>
            <person name="Ketchum K.A."/>
            <person name="Nelson K.E."/>
            <person name="Salzberg S.L."/>
            <person name="Smith H.O."/>
            <person name="Venter J.C."/>
            <person name="Fraser C.M."/>
        </authorList>
    </citation>
    <scope>NUCLEOTIDE SEQUENCE [LARGE SCALE GENOMIC DNA]</scope>
    <source>
        <strain>ATCC 13939 / DSM 20539 / JCM 16871 / CCUG 27074 / LMG 4051 / NBRC 15346 / NCIMB 9279 / VKM B-1422 / R1</strain>
    </source>
</reference>
<comment type="function">
    <text evidence="1">Catalyzes the reversible reaction in which hydroxymethyl group from 5,10-methylenetetrahydrofolate is transferred onto alpha-ketoisovalerate to form ketopantoate.</text>
</comment>
<comment type="catalytic activity">
    <reaction evidence="1">
        <text>3-methyl-2-oxobutanoate + (6R)-5,10-methylene-5,6,7,8-tetrahydrofolate + H2O = 2-dehydropantoate + (6S)-5,6,7,8-tetrahydrofolate</text>
        <dbReference type="Rhea" id="RHEA:11824"/>
        <dbReference type="ChEBI" id="CHEBI:11561"/>
        <dbReference type="ChEBI" id="CHEBI:11851"/>
        <dbReference type="ChEBI" id="CHEBI:15377"/>
        <dbReference type="ChEBI" id="CHEBI:15636"/>
        <dbReference type="ChEBI" id="CHEBI:57453"/>
        <dbReference type="EC" id="2.1.2.11"/>
    </reaction>
</comment>
<comment type="cofactor">
    <cofactor evidence="1">
        <name>Mg(2+)</name>
        <dbReference type="ChEBI" id="CHEBI:18420"/>
    </cofactor>
    <text evidence="1">Binds 1 Mg(2+) ion per subunit.</text>
</comment>
<comment type="pathway">
    <text evidence="1">Cofactor biosynthesis; (R)-pantothenate biosynthesis; (R)-pantoate from 3-methyl-2-oxobutanoate: step 1/2.</text>
</comment>
<comment type="subunit">
    <text evidence="1">Homodecamer; pentamer of dimers.</text>
</comment>
<comment type="subcellular location">
    <subcellularLocation>
        <location evidence="1">Cytoplasm</location>
    </subcellularLocation>
</comment>
<comment type="similarity">
    <text evidence="1">Belongs to the PanB family.</text>
</comment>
<comment type="sequence caution" evidence="2">
    <conflict type="erroneous initiation">
        <sequence resource="EMBL-CDS" id="AAF12151"/>
    </conflict>
</comment>
<keyword id="KW-0963">Cytoplasm</keyword>
<keyword id="KW-0460">Magnesium</keyword>
<keyword id="KW-0479">Metal-binding</keyword>
<keyword id="KW-0566">Pantothenate biosynthesis</keyword>
<keyword id="KW-1185">Reference proteome</keyword>
<keyword id="KW-0808">Transferase</keyword>
<protein>
    <recommendedName>
        <fullName evidence="1">3-methyl-2-oxobutanoate hydroxymethyltransferase</fullName>
        <ecNumber evidence="1">2.1.2.11</ecNumber>
    </recommendedName>
    <alternativeName>
        <fullName evidence="1">Ketopantoate hydroxymethyltransferase</fullName>
        <shortName evidence="1">KPHMT</shortName>
    </alternativeName>
</protein>
<name>PANB_DEIRA</name>
<feature type="chain" id="PRO_0000184839" description="3-methyl-2-oxobutanoate hydroxymethyltransferase">
    <location>
        <begin position="1"/>
        <end position="284"/>
    </location>
</feature>
<feature type="active site" description="Proton acceptor" evidence="1">
    <location>
        <position position="191"/>
    </location>
</feature>
<feature type="binding site" evidence="1">
    <location>
        <begin position="52"/>
        <end position="53"/>
    </location>
    <ligand>
        <name>3-methyl-2-oxobutanoate</name>
        <dbReference type="ChEBI" id="CHEBI:11851"/>
    </ligand>
</feature>
<feature type="binding site" evidence="1">
    <location>
        <position position="52"/>
    </location>
    <ligand>
        <name>Mg(2+)</name>
        <dbReference type="ChEBI" id="CHEBI:18420"/>
    </ligand>
</feature>
<feature type="binding site" evidence="1">
    <location>
        <position position="91"/>
    </location>
    <ligand>
        <name>3-methyl-2-oxobutanoate</name>
        <dbReference type="ChEBI" id="CHEBI:11851"/>
    </ligand>
</feature>
<feature type="binding site" evidence="1">
    <location>
        <position position="91"/>
    </location>
    <ligand>
        <name>Mg(2+)</name>
        <dbReference type="ChEBI" id="CHEBI:18420"/>
    </ligand>
</feature>
<feature type="binding site" evidence="1">
    <location>
        <position position="121"/>
    </location>
    <ligand>
        <name>3-methyl-2-oxobutanoate</name>
        <dbReference type="ChEBI" id="CHEBI:11851"/>
    </ligand>
</feature>
<feature type="binding site" evidence="1">
    <location>
        <position position="123"/>
    </location>
    <ligand>
        <name>Mg(2+)</name>
        <dbReference type="ChEBI" id="CHEBI:18420"/>
    </ligand>
</feature>
<sequence length="284" mass="30239">MASPARVKRSLPDLTHPELTSSGAPLVMVTAYDYPGARHAEAAGVDLILVGDSLGNVVLGYDSTAPVTLADMIHHGKAVRRGAPNTFLVVDLPFGTYHAGVTDAMRHAVRVIQETGADAVKMEGSTPEVLDVVRVLSRNGVPVMGHVGLMPQTAAAQGGLRVQGKDDDSARRTLEGAVALQEAGAFAVVLEAIPARLARLISERLSVATIGIGAGVHCDGQVLVYHDLLGLYEGEEKKIAKRYADLGREAREAIAHYAAEVRAREFPSKDNSFVMKDEVLDKLY</sequence>
<proteinExistence type="inferred from homology"/>
<organism>
    <name type="scientific">Deinococcus radiodurans (strain ATCC 13939 / DSM 20539 / JCM 16871 / CCUG 27074 / LMG 4051 / NBRC 15346 / NCIMB 9279 / VKM B-1422 / R1)</name>
    <dbReference type="NCBI Taxonomy" id="243230"/>
    <lineage>
        <taxon>Bacteria</taxon>
        <taxon>Thermotogati</taxon>
        <taxon>Deinococcota</taxon>
        <taxon>Deinococci</taxon>
        <taxon>Deinococcales</taxon>
        <taxon>Deinococcaceae</taxon>
        <taxon>Deinococcus</taxon>
    </lineage>
</organism>